<organism>
    <name type="scientific">Gallid herpesvirus 2 (strain GA)</name>
    <name type="common">GaHV-2</name>
    <name type="synonym">Marek's disease herpesvirus type 1</name>
    <dbReference type="NCBI Taxonomy" id="10388"/>
    <lineage>
        <taxon>Viruses</taxon>
        <taxon>Duplodnaviria</taxon>
        <taxon>Heunggongvirae</taxon>
        <taxon>Peploviricota</taxon>
        <taxon>Herviviricetes</taxon>
        <taxon>Herpesvirales</taxon>
        <taxon>Orthoherpesviridae</taxon>
        <taxon>Alphaherpesvirinae</taxon>
        <taxon>Mardivirus</taxon>
        <taxon>Mardivirus gallidalpha2</taxon>
        <taxon>Gallid alphaherpesvirus 2</taxon>
    </lineage>
</organism>
<accession>Q05107</accession>
<name>US10_GAHVG</name>
<dbReference type="EMBL" id="M80595">
    <property type="protein sequence ID" value="AAB59891.1"/>
    <property type="molecule type" value="Genomic_DNA"/>
</dbReference>
<dbReference type="EMBL" id="L22174">
    <property type="protein sequence ID" value="AAA64962.1"/>
    <property type="molecule type" value="Genomic_DNA"/>
</dbReference>
<dbReference type="KEGG" id="vg:4811465"/>
<dbReference type="GO" id="GO:0044204">
    <property type="term" value="C:host cell nuclear matrix"/>
    <property type="evidence" value="ECO:0007669"/>
    <property type="project" value="UniProtKB-SubCell"/>
</dbReference>
<dbReference type="GO" id="GO:0019033">
    <property type="term" value="C:viral tegument"/>
    <property type="evidence" value="ECO:0007669"/>
    <property type="project" value="UniProtKB-SubCell"/>
</dbReference>
<dbReference type="GO" id="GO:0008270">
    <property type="term" value="F:zinc ion binding"/>
    <property type="evidence" value="ECO:0007669"/>
    <property type="project" value="InterPro"/>
</dbReference>
<dbReference type="InterPro" id="IPR000714">
    <property type="entry name" value="EHV_Unk"/>
</dbReference>
<dbReference type="Pfam" id="PF02053">
    <property type="entry name" value="Gene66"/>
    <property type="match status" value="1"/>
</dbReference>
<dbReference type="PRINTS" id="PR00957">
    <property type="entry name" value="GENE66"/>
</dbReference>
<feature type="chain" id="PRO_0000116151" description="Virion protein US10 homolog">
    <location>
        <begin position="1"/>
        <end position="213"/>
    </location>
</feature>
<reference key="1">
    <citation type="journal article" date="1992" name="Virus Genes">
        <title>Sequence determination and genetic content of an 8.9-kb restriction fragment in the short unique region and the internal inverted repeat of Marek's disease virus type 1 DNA.</title>
        <authorList>
            <person name="Sakaguchi M."/>
            <person name="Urakawa T."/>
            <person name="Hirayama Y."/>
            <person name="Miki N."/>
            <person name="Yamamoto M."/>
            <person name="Hirai K."/>
        </authorList>
    </citation>
    <scope>NUCLEOTIDE SEQUENCE [GENOMIC DNA]</scope>
</reference>
<reference key="2">
    <citation type="journal article" date="1995" name="Virology">
        <title>The Marek's disease virus (MDV) unique short region: alphaherpesvirus-homologous, fowlpox virus-homologous, and MDV-specific genes.</title>
        <authorList>
            <person name="Brunovskis P."/>
            <person name="Velicer L.F."/>
        </authorList>
    </citation>
    <scope>NUCLEOTIDE SEQUENCE [GENOMIC DNA]</scope>
</reference>
<proteinExistence type="evidence at transcript level"/>
<keyword id="KW-1048">Host nucleus</keyword>
<keyword id="KW-0426">Late protein</keyword>
<keyword id="KW-0946">Virion</keyword>
<keyword id="KW-0920">Virion tegument</keyword>
<comment type="subcellular location">
    <subcellularLocation>
        <location evidence="1">Virion tegument</location>
    </subcellularLocation>
    <subcellularLocation>
        <location evidence="1">Host nucleus matrix</location>
    </subcellularLocation>
</comment>
<comment type="induction">
    <text>Expressed late in the infection cycle.</text>
</comment>
<comment type="PTM">
    <text evidence="1">Phosphorylated.</text>
</comment>
<comment type="similarity">
    <text evidence="2">Belongs to the herpesviridae US10 family.</text>
</comment>
<sequence>MAMWSLRRKSSRSVQLRVDSPKEQSYDILSAGGEHVALLPKSVRSLARTILTAATISQAAMKAGKPPSSRLWGEIFDRMTVTLNEYDISASPFHPTDPTRKIVGRALRCIERAPLTHEEMDTRFTIMMYWCCLGHAGYCTVSRLYEKNVRLMDIVGSATGCGISPLPEIESYWKPLCRAVATKGNAAIGDDAELAHYLTNLRESPTGDGESYL</sequence>
<gene>
    <name type="primary">US639</name>
    <name type="synonym">US10</name>
</gene>
<evidence type="ECO:0000250" key="1"/>
<evidence type="ECO:0000305" key="2"/>
<organismHost>
    <name type="scientific">Gallus gallus</name>
    <name type="common">Chicken</name>
    <dbReference type="NCBI Taxonomy" id="9031"/>
</organismHost>
<protein>
    <recommendedName>
        <fullName>Virion protein US10 homolog</fullName>
    </recommendedName>
</protein>